<reference key="1">
    <citation type="journal article" date="2001" name="Nature">
        <title>Complete genome sequence of a multiple drug resistant Salmonella enterica serovar Typhi CT18.</title>
        <authorList>
            <person name="Parkhill J."/>
            <person name="Dougan G."/>
            <person name="James K.D."/>
            <person name="Thomson N.R."/>
            <person name="Pickard D."/>
            <person name="Wain J."/>
            <person name="Churcher C.M."/>
            <person name="Mungall K.L."/>
            <person name="Bentley S.D."/>
            <person name="Holden M.T.G."/>
            <person name="Sebaihia M."/>
            <person name="Baker S."/>
            <person name="Basham D."/>
            <person name="Brooks K."/>
            <person name="Chillingworth T."/>
            <person name="Connerton P."/>
            <person name="Cronin A."/>
            <person name="Davis P."/>
            <person name="Davies R.M."/>
            <person name="Dowd L."/>
            <person name="White N."/>
            <person name="Farrar J."/>
            <person name="Feltwell T."/>
            <person name="Hamlin N."/>
            <person name="Haque A."/>
            <person name="Hien T.T."/>
            <person name="Holroyd S."/>
            <person name="Jagels K."/>
            <person name="Krogh A."/>
            <person name="Larsen T.S."/>
            <person name="Leather S."/>
            <person name="Moule S."/>
            <person name="O'Gaora P."/>
            <person name="Parry C."/>
            <person name="Quail M.A."/>
            <person name="Rutherford K.M."/>
            <person name="Simmonds M."/>
            <person name="Skelton J."/>
            <person name="Stevens K."/>
            <person name="Whitehead S."/>
            <person name="Barrell B.G."/>
        </authorList>
    </citation>
    <scope>NUCLEOTIDE SEQUENCE [LARGE SCALE GENOMIC DNA]</scope>
    <source>
        <strain>CT18</strain>
    </source>
</reference>
<reference key="2">
    <citation type="journal article" date="2003" name="J. Bacteriol.">
        <title>Comparative genomics of Salmonella enterica serovar Typhi strains Ty2 and CT18.</title>
        <authorList>
            <person name="Deng W."/>
            <person name="Liou S.-R."/>
            <person name="Plunkett G. III"/>
            <person name="Mayhew G.F."/>
            <person name="Rose D.J."/>
            <person name="Burland V."/>
            <person name="Kodoyianni V."/>
            <person name="Schwartz D.C."/>
            <person name="Blattner F.R."/>
        </authorList>
    </citation>
    <scope>NUCLEOTIDE SEQUENCE [LARGE SCALE GENOMIC DNA]</scope>
    <source>
        <strain>ATCC 700931 / Ty2</strain>
    </source>
</reference>
<protein>
    <recommendedName>
        <fullName evidence="1">Uncharacterized Nudix hydrolase NudL</fullName>
        <ecNumber evidence="1">3.6.1.-</ecNumber>
    </recommendedName>
</protein>
<organism>
    <name type="scientific">Salmonella typhi</name>
    <dbReference type="NCBI Taxonomy" id="90370"/>
    <lineage>
        <taxon>Bacteria</taxon>
        <taxon>Pseudomonadati</taxon>
        <taxon>Pseudomonadota</taxon>
        <taxon>Gammaproteobacteria</taxon>
        <taxon>Enterobacterales</taxon>
        <taxon>Enterobacteriaceae</taxon>
        <taxon>Salmonella</taxon>
    </lineage>
</organism>
<gene>
    <name evidence="1" type="primary">nudL</name>
    <name type="ordered locus">STY1955</name>
    <name type="ordered locus">t1052</name>
</gene>
<proteinExistence type="inferred from homology"/>
<feature type="chain" id="PRO_0000057147" description="Uncharacterized Nudix hydrolase NudL">
    <location>
        <begin position="1"/>
        <end position="192"/>
    </location>
</feature>
<feature type="domain" description="Nudix hydrolase" evidence="1">
    <location>
        <begin position="29"/>
        <end position="160"/>
    </location>
</feature>
<feature type="short sequence motif" description="Nudix box">
    <location>
        <begin position="67"/>
        <end position="89"/>
    </location>
</feature>
<feature type="binding site" evidence="1">
    <location>
        <position position="83"/>
    </location>
    <ligand>
        <name>Mg(2+)</name>
        <dbReference type="ChEBI" id="CHEBI:18420"/>
    </ligand>
</feature>
<feature type="binding site" evidence="1">
    <location>
        <position position="87"/>
    </location>
    <ligand>
        <name>Mg(2+)</name>
        <dbReference type="ChEBI" id="CHEBI:18420"/>
    </ligand>
</feature>
<feature type="sequence conflict" description="In Ref. 2; AAO68718." evidence="2" ref="2">
    <original>P</original>
    <variation>S</variation>
    <location>
        <position position="114"/>
    </location>
</feature>
<comment type="function">
    <text evidence="1">Probably mediates the hydrolysis of some nucleoside diphosphate derivatives.</text>
</comment>
<comment type="cofactor">
    <cofactor evidence="1">
        <name>Mn(2+)</name>
        <dbReference type="ChEBI" id="CHEBI:29035"/>
    </cofactor>
    <cofactor evidence="1">
        <name>Mg(2+)</name>
        <dbReference type="ChEBI" id="CHEBI:18420"/>
    </cofactor>
</comment>
<comment type="similarity">
    <text evidence="1">Belongs to the Nudix hydrolase family. PCD1 subfamily.</text>
</comment>
<keyword id="KW-0378">Hydrolase</keyword>
<keyword id="KW-0460">Magnesium</keyword>
<keyword id="KW-0464">Manganese</keyword>
<keyword id="KW-0479">Metal-binding</keyword>
<accession>P0A2L0</accession>
<accession>P43339</accession>
<evidence type="ECO:0000255" key="1">
    <source>
        <dbReference type="HAMAP-Rule" id="MF_01592"/>
    </source>
</evidence>
<evidence type="ECO:0000305" key="2"/>
<name>NUDL_SALTI</name>
<sequence length="192" mass="21431">MDTSRLTLDHFLSRFQLLRPQMTHETLNQRQAAVLIPVVRRPQPGLLLTQRAIHLRKHAGQVAFPGGAVDSTDASLIAAALREAQEEVAIPPQAVEVIGVLPPVDSVTGFQVTPVVGIIPPNLPWRASEDEVSAVFEMPLAQALQLGRYHPLDVYRRGNSHRVWLSWYEHYFVWGMTANILRELALQIGVKP</sequence>
<dbReference type="EC" id="3.6.1.-" evidence="1"/>
<dbReference type="EMBL" id="AL513382">
    <property type="protein sequence ID" value="CAD05508.1"/>
    <property type="molecule type" value="Genomic_DNA"/>
</dbReference>
<dbReference type="EMBL" id="AE014613">
    <property type="protein sequence ID" value="AAO68718.1"/>
    <property type="molecule type" value="Genomic_DNA"/>
</dbReference>
<dbReference type="RefSeq" id="NP_456332.1">
    <property type="nucleotide sequence ID" value="NC_003198.1"/>
</dbReference>
<dbReference type="RefSeq" id="WP_000381544.1">
    <property type="nucleotide sequence ID" value="NZ_WSUR01000004.1"/>
</dbReference>
<dbReference type="SMR" id="P0A2L0"/>
<dbReference type="STRING" id="220341.gene:17585873"/>
<dbReference type="KEGG" id="stt:t1052"/>
<dbReference type="KEGG" id="sty:STY1955"/>
<dbReference type="PATRIC" id="fig|220341.7.peg.1972"/>
<dbReference type="eggNOG" id="COG0494">
    <property type="taxonomic scope" value="Bacteria"/>
</dbReference>
<dbReference type="HOGENOM" id="CLU_040940_5_2_6"/>
<dbReference type="OMA" id="YYIWGAT"/>
<dbReference type="OrthoDB" id="9802805at2"/>
<dbReference type="Proteomes" id="UP000000541">
    <property type="component" value="Chromosome"/>
</dbReference>
<dbReference type="Proteomes" id="UP000002670">
    <property type="component" value="Chromosome"/>
</dbReference>
<dbReference type="GO" id="GO:0010945">
    <property type="term" value="F:coenzyme A diphosphatase activity"/>
    <property type="evidence" value="ECO:0007669"/>
    <property type="project" value="InterPro"/>
</dbReference>
<dbReference type="GO" id="GO:0000287">
    <property type="term" value="F:magnesium ion binding"/>
    <property type="evidence" value="ECO:0007669"/>
    <property type="project" value="UniProtKB-UniRule"/>
</dbReference>
<dbReference type="GO" id="GO:0030145">
    <property type="term" value="F:manganese ion binding"/>
    <property type="evidence" value="ECO:0007669"/>
    <property type="project" value="UniProtKB-UniRule"/>
</dbReference>
<dbReference type="GO" id="GO:0009132">
    <property type="term" value="P:nucleoside diphosphate metabolic process"/>
    <property type="evidence" value="ECO:0007669"/>
    <property type="project" value="InterPro"/>
</dbReference>
<dbReference type="CDD" id="cd03426">
    <property type="entry name" value="NUDIX_CoAse_Nudt7"/>
    <property type="match status" value="1"/>
</dbReference>
<dbReference type="Gene3D" id="3.90.79.10">
    <property type="entry name" value="Nucleoside Triphosphate Pyrophosphohydrolase"/>
    <property type="match status" value="1"/>
</dbReference>
<dbReference type="HAMAP" id="MF_01592">
    <property type="entry name" value="Nudix_NudL"/>
    <property type="match status" value="1"/>
</dbReference>
<dbReference type="InterPro" id="IPR045121">
    <property type="entry name" value="CoAse"/>
</dbReference>
<dbReference type="InterPro" id="IPR015797">
    <property type="entry name" value="NUDIX_hydrolase-like_dom_sf"/>
</dbReference>
<dbReference type="InterPro" id="IPR000086">
    <property type="entry name" value="NUDIX_hydrolase_dom"/>
</dbReference>
<dbReference type="InterPro" id="IPR000059">
    <property type="entry name" value="NUDIX_hydrolase_NudL_CS"/>
</dbReference>
<dbReference type="InterPro" id="IPR023735">
    <property type="entry name" value="Nudix_NudL"/>
</dbReference>
<dbReference type="NCBIfam" id="NF007980">
    <property type="entry name" value="PRK10707.1"/>
    <property type="match status" value="1"/>
</dbReference>
<dbReference type="PANTHER" id="PTHR12992:SF11">
    <property type="entry name" value="MITOCHONDRIAL COENZYME A DIPHOSPHATASE NUDT8"/>
    <property type="match status" value="1"/>
</dbReference>
<dbReference type="PANTHER" id="PTHR12992">
    <property type="entry name" value="NUDIX HYDROLASE"/>
    <property type="match status" value="1"/>
</dbReference>
<dbReference type="Pfam" id="PF00293">
    <property type="entry name" value="NUDIX"/>
    <property type="match status" value="1"/>
</dbReference>
<dbReference type="SUPFAM" id="SSF55811">
    <property type="entry name" value="Nudix"/>
    <property type="match status" value="1"/>
</dbReference>
<dbReference type="PROSITE" id="PS51462">
    <property type="entry name" value="NUDIX"/>
    <property type="match status" value="1"/>
</dbReference>
<dbReference type="PROSITE" id="PS01293">
    <property type="entry name" value="NUDIX_COA"/>
    <property type="match status" value="1"/>
</dbReference>